<reference key="1">
    <citation type="journal article" date="1991" name="J. Cell Biol.">
        <title>Characterization of SIS1, a Saccharomyces cerevisiae homologue of bacterial dnaJ proteins.</title>
        <authorList>
            <person name="Luke M.M."/>
            <person name="Sutton A."/>
            <person name="Arndt K.T."/>
        </authorList>
    </citation>
    <scope>NUCLEOTIDE SEQUENCE [GENOMIC DNA]</scope>
    <source>
        <strain>ATCC 204508 / S288c</strain>
    </source>
</reference>
<reference key="2">
    <citation type="journal article" date="1997" name="Nature">
        <title>The nucleotide sequence of Saccharomyces cerevisiae chromosome XIV and its evolutionary implications.</title>
        <authorList>
            <person name="Philippsen P."/>
            <person name="Kleine K."/>
            <person name="Poehlmann R."/>
            <person name="Duesterhoeft A."/>
            <person name="Hamberg K."/>
            <person name="Hegemann J.H."/>
            <person name="Obermaier B."/>
            <person name="Urrestarazu L.A."/>
            <person name="Aert R."/>
            <person name="Albermann K."/>
            <person name="Altmann R."/>
            <person name="Andre B."/>
            <person name="Baladron V."/>
            <person name="Ballesta J.P.G."/>
            <person name="Becam A.-M."/>
            <person name="Beinhauer J.D."/>
            <person name="Boskovic J."/>
            <person name="Buitrago M.J."/>
            <person name="Bussereau F."/>
            <person name="Coster F."/>
            <person name="Crouzet M."/>
            <person name="D'Angelo M."/>
            <person name="Dal Pero F."/>
            <person name="De Antoni A."/>
            <person name="del Rey F."/>
            <person name="Doignon F."/>
            <person name="Domdey H."/>
            <person name="Dubois E."/>
            <person name="Fiedler T.A."/>
            <person name="Fleig U."/>
            <person name="Floeth M."/>
            <person name="Fritz C."/>
            <person name="Gaillardin C."/>
            <person name="Garcia-Cantalejo J.M."/>
            <person name="Glansdorff N."/>
            <person name="Goffeau A."/>
            <person name="Gueldener U."/>
            <person name="Herbert C.J."/>
            <person name="Heumann K."/>
            <person name="Heuss-Neitzel D."/>
            <person name="Hilbert H."/>
            <person name="Hinni K."/>
            <person name="Iraqui Houssaini I."/>
            <person name="Jacquet M."/>
            <person name="Jimenez A."/>
            <person name="Jonniaux J.-L."/>
            <person name="Karpfinger-Hartl L."/>
            <person name="Lanfranchi G."/>
            <person name="Lepingle A."/>
            <person name="Levesque H."/>
            <person name="Lyck R."/>
            <person name="Maftahi M."/>
            <person name="Mallet L."/>
            <person name="Maurer C.T.C."/>
            <person name="Messenguy F."/>
            <person name="Mewes H.-W."/>
            <person name="Moestl D."/>
            <person name="Nasr F."/>
            <person name="Nicaud J.-M."/>
            <person name="Niedenthal R.K."/>
            <person name="Pandolfo D."/>
            <person name="Pierard A."/>
            <person name="Piravandi E."/>
            <person name="Planta R.J."/>
            <person name="Pohl T.M."/>
            <person name="Purnelle B."/>
            <person name="Rebischung C."/>
            <person name="Remacha M.A."/>
            <person name="Revuelta J.L."/>
            <person name="Rinke M."/>
            <person name="Saiz J.E."/>
            <person name="Sartorello F."/>
            <person name="Scherens B."/>
            <person name="Sen-Gupta M."/>
            <person name="Soler-Mira A."/>
            <person name="Urbanus J.H.M."/>
            <person name="Valle G."/>
            <person name="Van Dyck L."/>
            <person name="Verhasselt P."/>
            <person name="Vierendeels F."/>
            <person name="Vissers S."/>
            <person name="Voet M."/>
            <person name="Volckaert G."/>
            <person name="Wach A."/>
            <person name="Wambutt R."/>
            <person name="Wedler H."/>
            <person name="Zollner A."/>
            <person name="Hani J."/>
        </authorList>
    </citation>
    <scope>NUCLEOTIDE SEQUENCE [LARGE SCALE GENOMIC DNA]</scope>
    <source>
        <strain>ATCC 204508 / S288c</strain>
    </source>
</reference>
<reference key="3">
    <citation type="journal article" date="2014" name="G3 (Bethesda)">
        <title>The reference genome sequence of Saccharomyces cerevisiae: Then and now.</title>
        <authorList>
            <person name="Engel S.R."/>
            <person name="Dietrich F.S."/>
            <person name="Fisk D.G."/>
            <person name="Binkley G."/>
            <person name="Balakrishnan R."/>
            <person name="Costanzo M.C."/>
            <person name="Dwight S.S."/>
            <person name="Hitz B.C."/>
            <person name="Karra K."/>
            <person name="Nash R.S."/>
            <person name="Weng S."/>
            <person name="Wong E.D."/>
            <person name="Lloyd P."/>
            <person name="Skrzypek M.S."/>
            <person name="Miyasato S.R."/>
            <person name="Simison M."/>
            <person name="Cherry J.M."/>
        </authorList>
    </citation>
    <scope>GENOME REANNOTATION</scope>
    <source>
        <strain>ATCC 204508 / S288c</strain>
    </source>
</reference>
<reference key="4">
    <citation type="journal article" date="1993" name="Cell">
        <title>The yeast SIS1 protein, a DnaJ homolog, is required for the initiation of translation.</title>
        <authorList>
            <person name="Zhong T."/>
            <person name="Arndt K.T."/>
        </authorList>
    </citation>
    <scope>CHARACTERIZATION</scope>
</reference>
<reference key="5">
    <citation type="journal article" date="2001" name="J. Biol. Chem.">
        <title>The yeast hsp70 homologue Ssa is required for translation and interacts with Sis1 and Pab1 on translating ribosomes.</title>
        <authorList>
            <person name="Horton L.E."/>
            <person name="James P."/>
            <person name="Craig E.A."/>
            <person name="Hensold J.O."/>
        </authorList>
    </citation>
    <scope>INTERACTION WITH SSA1</scope>
</reference>
<reference key="6">
    <citation type="journal article" date="2003" name="Nature">
        <title>Global analysis of protein localization in budding yeast.</title>
        <authorList>
            <person name="Huh W.-K."/>
            <person name="Falvo J.V."/>
            <person name="Gerke L.C."/>
            <person name="Carroll A.S."/>
            <person name="Howson R.W."/>
            <person name="Weissman J.S."/>
            <person name="O'Shea E.K."/>
        </authorList>
    </citation>
    <scope>SUBCELLULAR LOCATION [LARGE SCALE ANALYSIS]</scope>
</reference>
<reference key="7">
    <citation type="journal article" date="2003" name="Nature">
        <title>Global analysis of protein expression in yeast.</title>
        <authorList>
            <person name="Ghaemmaghami S."/>
            <person name="Huh W.-K."/>
            <person name="Bower K."/>
            <person name="Howson R.W."/>
            <person name="Belle A."/>
            <person name="Dephoure N."/>
            <person name="O'Shea E.K."/>
            <person name="Weissman J.S."/>
        </authorList>
    </citation>
    <scope>LEVEL OF PROTEIN EXPRESSION [LARGE SCALE ANALYSIS]</scope>
</reference>
<reference key="8">
    <citation type="journal article" date="2008" name="Mol. Cell. Proteomics">
        <title>A multidimensional chromatography technology for in-depth phosphoproteome analysis.</title>
        <authorList>
            <person name="Albuquerque C.P."/>
            <person name="Smolka M.B."/>
            <person name="Payne S.H."/>
            <person name="Bafna V."/>
            <person name="Eng J."/>
            <person name="Zhou H."/>
        </authorList>
    </citation>
    <scope>IDENTIFICATION BY MASS SPECTROMETRY [LARGE SCALE ANALYSIS]</scope>
</reference>
<reference key="9">
    <citation type="journal article" date="2009" name="Science">
        <title>Global analysis of Cdk1 substrate phosphorylation sites provides insights into evolution.</title>
        <authorList>
            <person name="Holt L.J."/>
            <person name="Tuch B.B."/>
            <person name="Villen J."/>
            <person name="Johnson A.D."/>
            <person name="Gygi S.P."/>
            <person name="Morgan D.O."/>
        </authorList>
    </citation>
    <scope>PHOSPHORYLATION [LARGE SCALE ANALYSIS] AT SER-275</scope>
    <scope>IDENTIFICATION BY MASS SPECTROMETRY [LARGE SCALE ANALYSIS]</scope>
</reference>
<sequence length="352" mass="37590">MVKETKLYDLLGVSPSANEQELKKGYRKAALKYHPDKPTGDTEKFKEISEAFEILNDPQKREIYDQYGLEAARSGGPSFGPGGPGGAGGAGGFPGGAGGFSGGHAFSNEDAFNIFSQFFGGSSPFGGADDSGFSFSSYPSGGGAGMGGMPGGMGGMHGGMGGMPGGFRSASSSPTYPEEETVQVNLPVSLEDLFVGKKKSFKIGRKGPHGASEKTQIDIQLKPGWKAGTKITYKNQGDYNPQTGRRKTLQFVIQEKSHPNFKRDGDDLIYTLPLSFKESLLGFSKTIQTIDGRTLPLSRVQPVQPSQTSTYPGQGMPTPKNPSQRGNLIVKYKVDYPISLNDAQKRAIDENF</sequence>
<comment type="function">
    <text>Required for nuclear migration during mitosis. It is required for the normal initiation of translation. Might mediate the dissociation of a specific protein complex of the translation machinery. Essential for viability.</text>
</comment>
<comment type="subunit">
    <text evidence="3">Interacts with polyadenylate-binding protein PAB1.</text>
</comment>
<comment type="interaction">
    <interactant intactId="EBI-17244">
        <id>P25294</id>
    </interactant>
    <interactant intactId="EBI-21708">
        <id>P25367</id>
        <label>RNQ1</label>
    </interactant>
    <organismsDiffer>false</organismsDiffer>
    <experiments>3</experiments>
</comment>
<comment type="interaction">
    <interactant intactId="EBI-17244">
        <id>P25294</id>
    </interactant>
    <interactant intactId="EBI-8591">
        <id>P10591</id>
        <label>SSA1</label>
    </interactant>
    <organismsDiffer>false</organismsDiffer>
    <experiments>4</experiments>
</comment>
<comment type="interaction">
    <interactant intactId="EBI-17244">
        <id>P25294</id>
    </interactant>
    <interactant intactId="EBI-8603">
        <id>P10592</id>
        <label>SSA2</label>
    </interactant>
    <organismsDiffer>false</organismsDiffer>
    <experiments>3</experiments>
</comment>
<comment type="interaction">
    <interactant intactId="EBI-17244">
        <id>P25294</id>
    </interactant>
    <interactant intactId="EBI-8621">
        <id>P22202</id>
        <label>SSA4</label>
    </interactant>
    <organismsDiffer>false</organismsDiffer>
    <experiments>2</experiments>
</comment>
<comment type="interaction">
    <interactant intactId="EBI-17244">
        <id>P25294</id>
    </interactant>
    <interactant intactId="EBI-8648">
        <id>P32589</id>
        <label>SSE1</label>
    </interactant>
    <organismsDiffer>false</organismsDiffer>
    <experiments>3</experiments>
</comment>
<comment type="interaction">
    <interactant intactId="EBI-17244">
        <id>P25294</id>
    </interactant>
    <interactant intactId="EBI-8655">
        <id>P32590</id>
        <label>SSE2</label>
    </interactant>
    <organismsDiffer>false</organismsDiffer>
    <experiments>2</experiments>
</comment>
<comment type="interaction">
    <interactant intactId="EBI-17244">
        <id>P25294</id>
    </interactant>
    <interactant intactId="EBI-8411471">
        <id>Q7LKB1</id>
        <label>SUP35</label>
    </interactant>
    <organismsDiffer>true</organismsDiffer>
    <experiments>3</experiments>
</comment>
<comment type="subcellular location">
    <subcellularLocation>
        <location evidence="4">Cytoplasm</location>
    </subcellularLocation>
    <subcellularLocation>
        <location evidence="4">Nucleus</location>
    </subcellularLocation>
    <text>Localized throughout the cell but is more concentrated at the nucleus.</text>
</comment>
<comment type="miscellaneous">
    <text evidence="5">Present with 20300 molecules/cell in log phase SD medium.</text>
</comment>
<dbReference type="EMBL" id="X58460">
    <property type="protein sequence ID" value="CAA41366.1"/>
    <property type="molecule type" value="Genomic_DNA"/>
</dbReference>
<dbReference type="EMBL" id="Z71283">
    <property type="protein sequence ID" value="CAA95866.1"/>
    <property type="molecule type" value="Genomic_DNA"/>
</dbReference>
<dbReference type="EMBL" id="BK006947">
    <property type="protein sequence ID" value="DAA10536.1"/>
    <property type="molecule type" value="Genomic_DNA"/>
</dbReference>
<dbReference type="PIR" id="A39660">
    <property type="entry name" value="A39660"/>
</dbReference>
<dbReference type="RefSeq" id="NP_014391.1">
    <property type="nucleotide sequence ID" value="NM_001182846.1"/>
</dbReference>
<dbReference type="PDB" id="1C3G">
    <property type="method" value="X-ray"/>
    <property type="resolution" value="2.70 A"/>
    <property type="chains" value="A=180-349"/>
</dbReference>
<dbReference type="PDB" id="2B26">
    <property type="method" value="X-ray"/>
    <property type="resolution" value="3.20 A"/>
    <property type="chains" value="A/B/C=181-352"/>
</dbReference>
<dbReference type="PDB" id="4RWU">
    <property type="method" value="X-ray"/>
    <property type="resolution" value="1.25 A"/>
    <property type="chains" value="A=1-89"/>
</dbReference>
<dbReference type="PDB" id="6D6X">
    <property type="method" value="NMR"/>
    <property type="chains" value="A=2-81"/>
</dbReference>
<dbReference type="PDB" id="8EOD">
    <property type="method" value="NMR"/>
    <property type="chains" value="A=2-81"/>
</dbReference>
<dbReference type="PDBsum" id="1C3G"/>
<dbReference type="PDBsum" id="2B26"/>
<dbReference type="PDBsum" id="4RWU"/>
<dbReference type="PDBsum" id="6D6X"/>
<dbReference type="PDBsum" id="8EOD"/>
<dbReference type="SMR" id="P25294"/>
<dbReference type="BioGRID" id="35818">
    <property type="interactions" value="910"/>
</dbReference>
<dbReference type="DIP" id="DIP-4385N"/>
<dbReference type="FunCoup" id="P25294">
    <property type="interactions" value="568"/>
</dbReference>
<dbReference type="IntAct" id="P25294">
    <property type="interactions" value="52"/>
</dbReference>
<dbReference type="MINT" id="P25294"/>
<dbReference type="STRING" id="4932.YNL007C"/>
<dbReference type="TCDB" id="3.A.16.1.6">
    <property type="family name" value="the endoplasmic reticular retrotranslocon (er-rt) family"/>
</dbReference>
<dbReference type="iPTMnet" id="P25294"/>
<dbReference type="PaxDb" id="4932-YNL007C"/>
<dbReference type="PeptideAtlas" id="P25294"/>
<dbReference type="EnsemblFungi" id="YNL007C_mRNA">
    <property type="protein sequence ID" value="YNL007C"/>
    <property type="gene ID" value="YNL007C"/>
</dbReference>
<dbReference type="GeneID" id="855725"/>
<dbReference type="KEGG" id="sce:YNL007C"/>
<dbReference type="AGR" id="SGD:S000004952"/>
<dbReference type="SGD" id="S000004952">
    <property type="gene designation" value="SIS1"/>
</dbReference>
<dbReference type="VEuPathDB" id="FungiDB:YNL007C"/>
<dbReference type="eggNOG" id="KOG0714">
    <property type="taxonomic scope" value="Eukaryota"/>
</dbReference>
<dbReference type="GeneTree" id="ENSGT00940000176484"/>
<dbReference type="HOGENOM" id="CLU_017633_0_0_1"/>
<dbReference type="InParanoid" id="P25294"/>
<dbReference type="OMA" id="MGRDYYK"/>
<dbReference type="OrthoDB" id="550424at2759"/>
<dbReference type="BioCyc" id="YEAST:G3O-33049-MONOMER"/>
<dbReference type="BioGRID-ORCS" id="855725">
    <property type="hits" value="2 hits in 10 CRISPR screens"/>
</dbReference>
<dbReference type="CD-CODE" id="67785C55">
    <property type="entry name" value="Hypersomatic shock foci"/>
</dbReference>
<dbReference type="CD-CODE" id="9B47C524">
    <property type="entry name" value="Peri-nucleolar condensate"/>
</dbReference>
<dbReference type="CD-CODE" id="E03F929F">
    <property type="entry name" value="Stress granule"/>
</dbReference>
<dbReference type="EvolutionaryTrace" id="P25294"/>
<dbReference type="PRO" id="PR:P25294"/>
<dbReference type="Proteomes" id="UP000002311">
    <property type="component" value="Chromosome XIV"/>
</dbReference>
<dbReference type="RNAct" id="P25294">
    <property type="molecule type" value="protein"/>
</dbReference>
<dbReference type="GO" id="GO:0005829">
    <property type="term" value="C:cytosol"/>
    <property type="evidence" value="ECO:0000314"/>
    <property type="project" value="SGD"/>
</dbReference>
<dbReference type="GO" id="GO:0022627">
    <property type="term" value="C:cytosolic small ribosomal subunit"/>
    <property type="evidence" value="ECO:0000314"/>
    <property type="project" value="SGD"/>
</dbReference>
<dbReference type="GO" id="GO:0005730">
    <property type="term" value="C:nucleolus"/>
    <property type="evidence" value="ECO:0000314"/>
    <property type="project" value="SGD"/>
</dbReference>
<dbReference type="GO" id="GO:0005634">
    <property type="term" value="C:nucleus"/>
    <property type="evidence" value="ECO:0000314"/>
    <property type="project" value="SGD"/>
</dbReference>
<dbReference type="GO" id="GO:0003677">
    <property type="term" value="F:DNA binding"/>
    <property type="evidence" value="ECO:0007669"/>
    <property type="project" value="UniProtKB-KW"/>
</dbReference>
<dbReference type="GO" id="GO:0051787">
    <property type="term" value="F:misfolded protein binding"/>
    <property type="evidence" value="ECO:0000314"/>
    <property type="project" value="SGD"/>
</dbReference>
<dbReference type="GO" id="GO:0051087">
    <property type="term" value="F:protein-folding chaperone binding"/>
    <property type="evidence" value="ECO:0000318"/>
    <property type="project" value="GO_Central"/>
</dbReference>
<dbReference type="GO" id="GO:0051082">
    <property type="term" value="F:unfolded protein binding"/>
    <property type="evidence" value="ECO:0000318"/>
    <property type="project" value="GO_Central"/>
</dbReference>
<dbReference type="GO" id="GO:0034605">
    <property type="term" value="P:cellular response to heat"/>
    <property type="evidence" value="ECO:0000315"/>
    <property type="project" value="SGD"/>
</dbReference>
<dbReference type="GO" id="GO:0009267">
    <property type="term" value="P:cellular response to starvation"/>
    <property type="evidence" value="ECO:0000315"/>
    <property type="project" value="SGD"/>
</dbReference>
<dbReference type="GO" id="GO:0051085">
    <property type="term" value="P:chaperone cofactor-dependent protein refolding"/>
    <property type="evidence" value="ECO:0000318"/>
    <property type="project" value="GO_Central"/>
</dbReference>
<dbReference type="GO" id="GO:0002236">
    <property type="term" value="P:detection of misfolded protein"/>
    <property type="evidence" value="ECO:0000315"/>
    <property type="project" value="SGD"/>
</dbReference>
<dbReference type="GO" id="GO:0070843">
    <property type="term" value="P:misfolded protein transport"/>
    <property type="evidence" value="ECO:0000315"/>
    <property type="project" value="SGD"/>
</dbReference>
<dbReference type="GO" id="GO:0072671">
    <property type="term" value="P:mitochondria-associated ubiquitin-dependent protein catabolic process"/>
    <property type="evidence" value="ECO:0000315"/>
    <property type="project" value="SGD"/>
</dbReference>
<dbReference type="GO" id="GO:0071630">
    <property type="term" value="P:nuclear protein quality control by the ubiquitin-proteasome system"/>
    <property type="evidence" value="ECO:0000315"/>
    <property type="project" value="SGD"/>
</dbReference>
<dbReference type="GO" id="GO:0006457">
    <property type="term" value="P:protein folding"/>
    <property type="evidence" value="ECO:0000314"/>
    <property type="project" value="SGD"/>
</dbReference>
<dbReference type="GO" id="GO:0006413">
    <property type="term" value="P:translational initiation"/>
    <property type="evidence" value="ECO:0000315"/>
    <property type="project" value="SGD"/>
</dbReference>
<dbReference type="GO" id="GO:0035719">
    <property type="term" value="P:tRNA import into nucleus"/>
    <property type="evidence" value="ECO:0000315"/>
    <property type="project" value="SGD"/>
</dbReference>
<dbReference type="CDD" id="cd06257">
    <property type="entry name" value="DnaJ"/>
    <property type="match status" value="1"/>
</dbReference>
<dbReference type="CDD" id="cd10747">
    <property type="entry name" value="DnaJ_C"/>
    <property type="match status" value="1"/>
</dbReference>
<dbReference type="FunFam" id="2.60.260.20:FF:000002">
    <property type="entry name" value="Dnaj homolog subfamily b member"/>
    <property type="match status" value="1"/>
</dbReference>
<dbReference type="FunFam" id="2.60.260.20:FF:000042">
    <property type="entry name" value="Protein SIS1"/>
    <property type="match status" value="1"/>
</dbReference>
<dbReference type="FunFam" id="1.10.287.110:FF:000092">
    <property type="entry name" value="Type II HSP40 co-chaperone"/>
    <property type="match status" value="1"/>
</dbReference>
<dbReference type="Gene3D" id="1.10.287.110">
    <property type="entry name" value="DnaJ domain"/>
    <property type="match status" value="1"/>
</dbReference>
<dbReference type="Gene3D" id="2.60.260.20">
    <property type="entry name" value="Urease metallochaperone UreE, N-terminal domain"/>
    <property type="match status" value="2"/>
</dbReference>
<dbReference type="InterPro" id="IPR002939">
    <property type="entry name" value="DnaJ_C"/>
</dbReference>
<dbReference type="InterPro" id="IPR001623">
    <property type="entry name" value="DnaJ_domain"/>
</dbReference>
<dbReference type="InterPro" id="IPR018253">
    <property type="entry name" value="DnaJ_domain_CS"/>
</dbReference>
<dbReference type="InterPro" id="IPR051339">
    <property type="entry name" value="DnaJ_subfamily_B"/>
</dbReference>
<dbReference type="InterPro" id="IPR008971">
    <property type="entry name" value="HSP40/DnaJ_pept-bd"/>
</dbReference>
<dbReference type="InterPro" id="IPR036869">
    <property type="entry name" value="J_dom_sf"/>
</dbReference>
<dbReference type="PANTHER" id="PTHR24078:SF553">
    <property type="entry name" value="DNAJ HOMOLOG SUBFAMILY B MEMBER 5"/>
    <property type="match status" value="1"/>
</dbReference>
<dbReference type="PANTHER" id="PTHR24078">
    <property type="entry name" value="DNAJ HOMOLOG SUBFAMILY C MEMBER"/>
    <property type="match status" value="1"/>
</dbReference>
<dbReference type="Pfam" id="PF00226">
    <property type="entry name" value="DnaJ"/>
    <property type="match status" value="1"/>
</dbReference>
<dbReference type="Pfam" id="PF01556">
    <property type="entry name" value="DnaJ_C"/>
    <property type="match status" value="1"/>
</dbReference>
<dbReference type="PRINTS" id="PR00625">
    <property type="entry name" value="JDOMAIN"/>
</dbReference>
<dbReference type="SMART" id="SM00271">
    <property type="entry name" value="DnaJ"/>
    <property type="match status" value="1"/>
</dbReference>
<dbReference type="SUPFAM" id="SSF46565">
    <property type="entry name" value="Chaperone J-domain"/>
    <property type="match status" value="1"/>
</dbReference>
<dbReference type="SUPFAM" id="SSF49493">
    <property type="entry name" value="HSP40/DnaJ peptide-binding domain"/>
    <property type="match status" value="2"/>
</dbReference>
<dbReference type="PROSITE" id="PS00636">
    <property type="entry name" value="DNAJ_1"/>
    <property type="match status" value="1"/>
</dbReference>
<dbReference type="PROSITE" id="PS50076">
    <property type="entry name" value="DNAJ_2"/>
    <property type="match status" value="1"/>
</dbReference>
<evidence type="ECO:0000255" key="1">
    <source>
        <dbReference type="PROSITE-ProRule" id="PRU00286"/>
    </source>
</evidence>
<evidence type="ECO:0000256" key="2">
    <source>
        <dbReference type="SAM" id="MobiDB-lite"/>
    </source>
</evidence>
<evidence type="ECO:0000269" key="3">
    <source>
    </source>
</evidence>
<evidence type="ECO:0000269" key="4">
    <source>
    </source>
</evidence>
<evidence type="ECO:0000269" key="5">
    <source>
    </source>
</evidence>
<evidence type="ECO:0007744" key="6">
    <source>
    </source>
</evidence>
<evidence type="ECO:0007829" key="7">
    <source>
        <dbReference type="PDB" id="1C3G"/>
    </source>
</evidence>
<evidence type="ECO:0007829" key="8">
    <source>
        <dbReference type="PDB" id="2B26"/>
    </source>
</evidence>
<evidence type="ECO:0007829" key="9">
    <source>
        <dbReference type="PDB" id="4RWU"/>
    </source>
</evidence>
<name>SIS1_YEAST</name>
<keyword id="KW-0002">3D-structure</keyword>
<keyword id="KW-0131">Cell cycle</keyword>
<keyword id="KW-0143">Chaperone</keyword>
<keyword id="KW-0963">Cytoplasm</keyword>
<keyword id="KW-0238">DNA-binding</keyword>
<keyword id="KW-0539">Nucleus</keyword>
<keyword id="KW-0597">Phosphoprotein</keyword>
<keyword id="KW-1185">Reference proteome</keyword>
<organism>
    <name type="scientific">Saccharomyces cerevisiae (strain ATCC 204508 / S288c)</name>
    <name type="common">Baker's yeast</name>
    <dbReference type="NCBI Taxonomy" id="559292"/>
    <lineage>
        <taxon>Eukaryota</taxon>
        <taxon>Fungi</taxon>
        <taxon>Dikarya</taxon>
        <taxon>Ascomycota</taxon>
        <taxon>Saccharomycotina</taxon>
        <taxon>Saccharomycetes</taxon>
        <taxon>Saccharomycetales</taxon>
        <taxon>Saccharomycetaceae</taxon>
        <taxon>Saccharomyces</taxon>
    </lineage>
</organism>
<feature type="chain" id="PRO_0000071090" description="Protein SIS1">
    <location>
        <begin position="1"/>
        <end position="352"/>
    </location>
</feature>
<feature type="domain" description="J" evidence="1">
    <location>
        <begin position="4"/>
        <end position="70"/>
    </location>
</feature>
<feature type="region of interest" description="Disordered" evidence="2">
    <location>
        <begin position="300"/>
        <end position="325"/>
    </location>
</feature>
<feature type="compositionally biased region" description="Polar residues" evidence="2">
    <location>
        <begin position="301"/>
        <end position="312"/>
    </location>
</feature>
<feature type="modified residue" description="Phosphoserine" evidence="6">
    <location>
        <position position="275"/>
    </location>
</feature>
<feature type="helix" evidence="9">
    <location>
        <begin position="6"/>
        <end position="11"/>
    </location>
</feature>
<feature type="helix" evidence="9">
    <location>
        <begin position="19"/>
        <end position="33"/>
    </location>
</feature>
<feature type="helix" evidence="9">
    <location>
        <begin position="42"/>
        <end position="55"/>
    </location>
</feature>
<feature type="helix" evidence="9">
    <location>
        <begin position="58"/>
        <end position="67"/>
    </location>
</feature>
<feature type="helix" evidence="9">
    <location>
        <begin position="69"/>
        <end position="73"/>
    </location>
</feature>
<feature type="strand" evidence="7">
    <location>
        <begin position="181"/>
        <end position="188"/>
    </location>
</feature>
<feature type="helix" evidence="7">
    <location>
        <begin position="190"/>
        <end position="195"/>
    </location>
</feature>
<feature type="strand" evidence="7">
    <location>
        <begin position="198"/>
        <end position="207"/>
    </location>
</feature>
<feature type="turn" evidence="7">
    <location>
        <begin position="208"/>
        <end position="210"/>
    </location>
</feature>
<feature type="strand" evidence="7">
    <location>
        <begin position="211"/>
        <end position="220"/>
    </location>
</feature>
<feature type="strand" evidence="7">
    <location>
        <begin position="230"/>
        <end position="235"/>
    </location>
</feature>
<feature type="strand" evidence="7">
    <location>
        <begin position="237"/>
        <end position="239"/>
    </location>
</feature>
<feature type="strand" evidence="7">
    <location>
        <begin position="241"/>
        <end position="244"/>
    </location>
</feature>
<feature type="strand" evidence="7">
    <location>
        <begin position="248"/>
        <end position="255"/>
    </location>
</feature>
<feature type="strand" evidence="7">
    <location>
        <begin position="259"/>
        <end position="264"/>
    </location>
</feature>
<feature type="strand" evidence="7">
    <location>
        <begin position="267"/>
        <end position="272"/>
    </location>
</feature>
<feature type="helix" evidence="7">
    <location>
        <begin position="276"/>
        <end position="281"/>
    </location>
</feature>
<feature type="strand" evidence="7">
    <location>
        <begin position="283"/>
        <end position="288"/>
    </location>
</feature>
<feature type="strand" evidence="7">
    <location>
        <begin position="290"/>
        <end position="292"/>
    </location>
</feature>
<feature type="strand" evidence="7">
    <location>
        <begin position="294"/>
        <end position="301"/>
    </location>
</feature>
<feature type="strand" evidence="7">
    <location>
        <begin position="308"/>
        <end position="310"/>
    </location>
</feature>
<feature type="strand" evidence="8">
    <location>
        <begin position="319"/>
        <end position="321"/>
    </location>
</feature>
<feature type="strand" evidence="7">
    <location>
        <begin position="328"/>
        <end position="332"/>
    </location>
</feature>
<feature type="helix" evidence="7">
    <location>
        <begin position="344"/>
        <end position="347"/>
    </location>
</feature>
<gene>
    <name type="primary">SIS1</name>
    <name type="ordered locus">YNL007C</name>
    <name type="ORF">N2879</name>
</gene>
<accession>P25294</accession>
<accession>D6W1H0</accession>
<proteinExistence type="evidence at protein level"/>
<protein>
    <recommendedName>
        <fullName>Protein SIS1</fullName>
    </recommendedName>
</protein>